<dbReference type="EMBL" id="D11079">
    <property type="protein sequence ID" value="BAA01844.1"/>
    <property type="molecule type" value="Genomic_DNA"/>
</dbReference>
<dbReference type="EMBL" id="M58053">
    <property type="protein sequence ID" value="AAA47964.1"/>
    <property type="molecule type" value="Genomic_DNA"/>
</dbReference>
<dbReference type="EMBL" id="AY243312">
    <property type="protein sequence ID" value="AAO89475.1"/>
    <property type="molecule type" value="Genomic_DNA"/>
</dbReference>
<dbReference type="PIR" id="JQ1808">
    <property type="entry name" value="JQ1808"/>
</dbReference>
<dbReference type="PDB" id="2VVY">
    <property type="method" value="X-ray"/>
    <property type="resolution" value="2.69 A"/>
    <property type="chains" value="A/B/C/D=1-149"/>
</dbReference>
<dbReference type="PDBsum" id="2VVY"/>
<dbReference type="SMR" id="P24772"/>
<dbReference type="IntAct" id="P24772">
    <property type="interactions" value="17"/>
</dbReference>
<dbReference type="DNASU" id="3707573"/>
<dbReference type="KEGG" id="vg:3707573"/>
<dbReference type="EvolutionaryTrace" id="P24772"/>
<dbReference type="Proteomes" id="UP000000344">
    <property type="component" value="Genome"/>
</dbReference>
<dbReference type="GO" id="GO:0005737">
    <property type="term" value="C:cytoplasm"/>
    <property type="evidence" value="ECO:0000305"/>
    <property type="project" value="UniProt"/>
</dbReference>
<dbReference type="GO" id="GO:0140313">
    <property type="term" value="F:molecular sequestering activity"/>
    <property type="evidence" value="ECO:0000314"/>
    <property type="project" value="UniProt"/>
</dbReference>
<dbReference type="GO" id="GO:0085034">
    <property type="term" value="P:symbiont-mediated suppression of host NF-kappaB cascade"/>
    <property type="evidence" value="ECO:0000314"/>
    <property type="project" value="UniProt"/>
</dbReference>
<dbReference type="Gene3D" id="1.10.437.20">
    <property type="entry name" value="dsDNA poxvirus"/>
    <property type="match status" value="1"/>
</dbReference>
<dbReference type="InterPro" id="IPR011212">
    <property type="entry name" value="Poxvirus_B14/B22/C16"/>
</dbReference>
<dbReference type="InterPro" id="IPR022819">
    <property type="entry name" value="Poxvirus_Bcl-2-like"/>
</dbReference>
<dbReference type="InterPro" id="IPR043018">
    <property type="entry name" value="Poxvirus_sf"/>
</dbReference>
<dbReference type="Pfam" id="PF06227">
    <property type="entry name" value="Poxv_Bcl-2-like"/>
    <property type="match status" value="1"/>
</dbReference>
<dbReference type="PIRSF" id="PIRSF017324">
    <property type="entry name" value="UCP017324"/>
    <property type="match status" value="1"/>
</dbReference>
<keyword id="KW-0002">3D-structure</keyword>
<keyword id="KW-0244">Early protein</keyword>
<keyword id="KW-0945">Host-virus interaction</keyword>
<keyword id="KW-1100">Inhibition of host NF-kappa-B by virus</keyword>
<keyword id="KW-1185">Reference proteome</keyword>
<reference key="1">
    <citation type="journal article" date="1991" name="J. Gen. Virol.">
        <title>Nucleotide sequence of 42 kbp of vaccinia virus strain WR from near the right inverted terminal repeat.</title>
        <authorList>
            <person name="Smith G.L."/>
            <person name="Chan Y.S."/>
            <person name="Howard S.T."/>
        </authorList>
    </citation>
    <scope>NUCLEOTIDE SEQUENCE [GENOMIC DNA]</scope>
</reference>
<reference key="2">
    <citation type="journal article" date="1991" name="Virology">
        <title>Vaccinia virus homologues of the Shope fibroma virus inverted terminal repeat proteins and a discontinuous ORF related to the tumor necrosis factor receptor family.</title>
        <authorList>
            <person name="Howard S.T."/>
            <person name="Chan Y.S."/>
            <person name="Smith G.L."/>
        </authorList>
    </citation>
    <scope>NUCLEOTIDE SEQUENCE [GENOMIC DNA]</scope>
</reference>
<reference key="3">
    <citation type="submission" date="2003-02" db="EMBL/GenBank/DDBJ databases">
        <title>Sequencing of the coding region of Vaccinia-WR to an average 9-fold redundancy and an error rate of 0.16/10kb.</title>
        <authorList>
            <person name="Esposito J.J."/>
            <person name="Frace A.M."/>
            <person name="Sammons S.A."/>
            <person name="Olsen-Rasmussen M."/>
            <person name="Osborne J."/>
            <person name="Wohlhueter R."/>
        </authorList>
    </citation>
    <scope>NUCLEOTIDE SEQUENCE [LARGE SCALE GENOMIC DNA]</scope>
</reference>
<reference key="4">
    <citation type="journal article" date="2008" name="PLoS Pathog.">
        <title>Inhibition of IkappaB kinase by vaccinia virus virulence factor B14.</title>
        <authorList>
            <person name="Chen R.A."/>
            <person name="Ryzhakov G."/>
            <person name="Cooray S."/>
            <person name="Randow F."/>
            <person name="Smith G.L."/>
        </authorList>
    </citation>
    <scope>INTERACTION WITH HOST IKBKB</scope>
</reference>
<reference key="5">
    <citation type="journal article" date="2010" name="Virol. J.">
        <title>A poxvirus Bcl-2-like gene family involved in regulation of host immune response: sequence similarity and evolutionary history.</title>
        <authorList>
            <person name="Gonzalez J.M."/>
            <person name="Esteban M."/>
        </authorList>
    </citation>
    <scope>SIMILARITY</scope>
</reference>
<reference key="6">
    <citation type="journal article" date="2011" name="J. Biol. Chem.">
        <title>Mapping the I{kappa}B Kinase {beta} (IKK{beta})-binding interface of the B14 protein, a vaccinia virus inhibitor of IKK{beta}-mediated activation of nuclear factor {kappa}B.</title>
        <authorList>
            <person name="Benfield C.T."/>
            <person name="Mansur D.S."/>
            <person name="McCoy L.E."/>
            <person name="Ferguson B.J."/>
            <person name="Bahar M.W."/>
            <person name="Oldring A.P."/>
            <person name="Grimes J.M."/>
            <person name="Stuart D.I."/>
            <person name="Graham S.C."/>
            <person name="Smith G.L."/>
        </authorList>
    </citation>
    <scope>FUNCTION</scope>
    <scope>SUBUNIT</scope>
    <scope>MUTAGENESIS OF TYR-35 AND PHE-130</scope>
</reference>
<reference key="7">
    <citation type="journal article" date="2018" name="J. Biol. Chem.">
        <title>Mechanism of vaccinia viral protein B14 mediated inhibition of IkappaB kinase beta activation.</title>
        <authorList>
            <person name="Tang Q."/>
            <person name="Chakraborty S."/>
            <person name="Xu G."/>
        </authorList>
    </citation>
    <scope>FUNCTION</scope>
    <scope>INTERACTION WITH HOST IKBKB</scope>
</reference>
<reference key="8">
    <citation type="journal article" date="2008" name="PLoS Pathog.">
        <title>Vaccinia virus proteins A52 and B14 Share a Bcl-2-like fold but have evolved to inhibit NF-kappaB rather than apoptosis.</title>
        <authorList>
            <person name="Graham S.C."/>
            <person name="Bahar M.W."/>
            <person name="Cooray S."/>
            <person name="Chen R.A."/>
            <person name="Whalen D.M."/>
            <person name="Abrescia N.G."/>
            <person name="Alderton D."/>
            <person name="Owens R.J."/>
            <person name="Stuart D.I."/>
            <person name="Smith G.L."/>
            <person name="Grimes J.M."/>
        </authorList>
    </citation>
    <scope>X-RAY CRYSTALLOGRAPHY (2.69 ANGSTROMS)</scope>
</reference>
<protein>
    <recommendedName>
        <fullName>Protein OPG200</fullName>
    </recommendedName>
</protein>
<comment type="function">
    <text evidence="1 2">Contributes to virulence by binding to the host IKBKB subunit of the IKK complex and preventing host NF-kappa-B activation in response to pro-inflammatory stimuli such as TNF-alpha or IL1B. Mechanistically, sterically hinders the direct contact between the kinase domains of IKBKB in the IKK complex containing IKBKB, CHUK/IKKA and NEMO (PubMed:29748387).</text>
</comment>
<comment type="subunit">
    <text evidence="1 2">Homodimers. Interacts with host IKBKB; this interaction inhibits host NF-kappa-B activation.</text>
</comment>
<comment type="interaction">
    <interactant intactId="EBI-4291651">
        <id>P24772</id>
    </interactant>
    <interactant intactId="EBI-81249">
        <id>O15111</id>
        <label>CHUK</label>
    </interactant>
    <organismsDiffer>true</organismsDiffer>
    <experiments>3</experiments>
</comment>
<comment type="interaction">
    <interactant intactId="EBI-4291651">
        <id>P24772</id>
    </interactant>
    <interactant intactId="EBI-81266">
        <id>O14920</id>
        <label>IKBKB</label>
    </interactant>
    <organismsDiffer>true</organismsDiffer>
    <experiments>3</experiments>
</comment>
<comment type="interaction">
    <interactant intactId="EBI-4291651">
        <id>P24772</id>
    </interactant>
    <interactant intactId="EBI-998011">
        <id>O88522</id>
        <label>Ikbkg</label>
    </interactant>
    <organismsDiffer>true</organismsDiffer>
    <experiments>2</experiments>
</comment>
<comment type="similarity">
    <text evidence="3">Belongs to the orthopoxvirus OPG200 family.</text>
</comment>
<organism>
    <name type="scientific">Vaccinia virus (strain Western Reserve)</name>
    <name type="common">VACV</name>
    <name type="synonym">Vaccinia virus (strain WR)</name>
    <dbReference type="NCBI Taxonomy" id="10254"/>
    <lineage>
        <taxon>Viruses</taxon>
        <taxon>Varidnaviria</taxon>
        <taxon>Bamfordvirae</taxon>
        <taxon>Nucleocytoviricota</taxon>
        <taxon>Pokkesviricetes</taxon>
        <taxon>Chitovirales</taxon>
        <taxon>Poxviridae</taxon>
        <taxon>Chordopoxvirinae</taxon>
        <taxon>Orthopoxvirus</taxon>
        <taxon>Vaccinia virus</taxon>
    </lineage>
</organism>
<organismHost>
    <name type="scientific">Bos taurus</name>
    <name type="common">Bovine</name>
    <dbReference type="NCBI Taxonomy" id="9913"/>
</organismHost>
<name>PG200_VACCW</name>
<sequence length="149" mass="17382">MTANFSTHVFSPQHCGCDRLTSIDDVRQCLTEYIYWSSYAYRNRQCAGQLYSTLLSFRDDAELVFIDIRELVKNMPWDDVKDCAEIIRCYIPDEQKTIREISAIIGLCAYAATYWGGEDHPTSNSLNALFVMLEMLNYVDYNIIFRRMN</sequence>
<gene>
    <name type="primary">OPG200</name>
    <name type="ordered locus">VACWR196</name>
    <name type="ORF">B14R</name>
</gene>
<proteinExistence type="evidence at protein level"/>
<evidence type="ECO:0000269" key="1">
    <source>
    </source>
</evidence>
<evidence type="ECO:0000269" key="2">
    <source>
    </source>
</evidence>
<evidence type="ECO:0000305" key="3"/>
<evidence type="ECO:0007829" key="4">
    <source>
        <dbReference type="PDB" id="2VVY"/>
    </source>
</evidence>
<feature type="chain" id="PRO_0000099365" description="Protein OPG200">
    <location>
        <begin position="1"/>
        <end position="149"/>
    </location>
</feature>
<feature type="mutagenesis site" description="Disrupts self-association." evidence="1">
    <original>Y</original>
    <variation>E</variation>
    <location>
        <position position="35"/>
    </location>
</feature>
<feature type="mutagenesis site" description="Disrupts self-association and NF-kappa-B inhibition by B14." evidence="1">
    <original>F</original>
    <variation>K</variation>
    <location>
        <position position="130"/>
    </location>
</feature>
<feature type="helix" evidence="4">
    <location>
        <begin position="23"/>
        <end position="25"/>
    </location>
</feature>
<feature type="helix" evidence="4">
    <location>
        <begin position="26"/>
        <end position="36"/>
    </location>
</feature>
<feature type="turn" evidence="4">
    <location>
        <begin position="37"/>
        <end position="39"/>
    </location>
</feature>
<feature type="helix" evidence="4">
    <location>
        <begin position="40"/>
        <end position="42"/>
    </location>
</feature>
<feature type="helix" evidence="4">
    <location>
        <begin position="49"/>
        <end position="55"/>
    </location>
</feature>
<feature type="helix" evidence="4">
    <location>
        <begin position="57"/>
        <end position="65"/>
    </location>
</feature>
<feature type="helix" evidence="4">
    <location>
        <begin position="68"/>
        <end position="74"/>
    </location>
</feature>
<feature type="helix" evidence="4">
    <location>
        <begin position="80"/>
        <end position="90"/>
    </location>
</feature>
<feature type="helix" evidence="4">
    <location>
        <begin position="98"/>
        <end position="115"/>
    </location>
</feature>
<feature type="strand" evidence="4">
    <location>
        <begin position="118"/>
        <end position="120"/>
    </location>
</feature>
<feature type="helix" evidence="4">
    <location>
        <begin position="123"/>
        <end position="135"/>
    </location>
</feature>
<feature type="helix" evidence="4">
    <location>
        <begin position="138"/>
        <end position="144"/>
    </location>
</feature>
<feature type="helix" evidence="4">
    <location>
        <begin position="145"/>
        <end position="147"/>
    </location>
</feature>
<accession>P24772</accession>
<accession>Q76ZK9</accession>